<dbReference type="EMBL" id="AK296718">
    <property type="protein sequence ID" value="BAH12419.1"/>
    <property type="molecule type" value="mRNA"/>
</dbReference>
<dbReference type="EMBL" id="AL834426">
    <property type="protein sequence ID" value="CAD39087.2"/>
    <property type="molecule type" value="mRNA"/>
</dbReference>
<dbReference type="EMBL" id="AC104237">
    <property type="status" value="NOT_ANNOTATED_CDS"/>
    <property type="molecule type" value="Genomic_DNA"/>
</dbReference>
<dbReference type="EMBL" id="AC107884">
    <property type="status" value="NOT_ANNOTATED_CDS"/>
    <property type="molecule type" value="Genomic_DNA"/>
</dbReference>
<dbReference type="EMBL" id="BC021714">
    <property type="protein sequence ID" value="AAH21714.1"/>
    <property type="molecule type" value="mRNA"/>
</dbReference>
<dbReference type="EMBL" id="AF034803">
    <property type="protein sequence ID" value="AAC26104.1"/>
    <property type="molecule type" value="mRNA"/>
</dbReference>
<dbReference type="CCDS" id="CCDS31419.1">
    <molecule id="Q8ND30-1"/>
</dbReference>
<dbReference type="CCDS" id="CCDS58116.1">
    <molecule id="Q8ND30-2"/>
</dbReference>
<dbReference type="CCDS" id="CCDS58117.1">
    <molecule id="Q8ND30-3"/>
</dbReference>
<dbReference type="RefSeq" id="NP_001243497.2">
    <molecule id="Q8ND30-2"/>
    <property type="nucleotide sequence ID" value="NM_001256568.2"/>
</dbReference>
<dbReference type="RefSeq" id="NP_001243498.2">
    <molecule id="Q8ND30-3"/>
    <property type="nucleotide sequence ID" value="NM_001256569.2"/>
</dbReference>
<dbReference type="RefSeq" id="NP_001338791.2">
    <molecule id="Q8ND30-1"/>
    <property type="nucleotide sequence ID" value="NM_001351862.2"/>
</dbReference>
<dbReference type="RefSeq" id="NP_003612.3">
    <molecule id="Q8ND30-1"/>
    <property type="nucleotide sequence ID" value="NM_003621.5"/>
</dbReference>
<dbReference type="RefSeq" id="XP_016873932.1">
    <property type="nucleotide sequence ID" value="XM_017018443.1"/>
</dbReference>
<dbReference type="PDB" id="3QH9">
    <property type="method" value="X-ray"/>
    <property type="resolution" value="2.01 A"/>
    <property type="chains" value="A=198-263"/>
</dbReference>
<dbReference type="PDBsum" id="3QH9"/>
<dbReference type="SMR" id="Q8ND30"/>
<dbReference type="BioGRID" id="114067">
    <property type="interactions" value="46"/>
</dbReference>
<dbReference type="DIP" id="DIP-42373N"/>
<dbReference type="FunCoup" id="Q8ND30">
    <property type="interactions" value="319"/>
</dbReference>
<dbReference type="IntAct" id="Q8ND30">
    <property type="interactions" value="29"/>
</dbReference>
<dbReference type="MINT" id="Q8ND30"/>
<dbReference type="STRING" id="9606.ENSP00000299492"/>
<dbReference type="GlyGen" id="Q8ND30">
    <property type="glycosylation" value="2 sites, 1 O-linked glycan (1 site)"/>
</dbReference>
<dbReference type="iPTMnet" id="Q8ND30"/>
<dbReference type="PhosphoSitePlus" id="Q8ND30"/>
<dbReference type="SwissPalm" id="Q8ND30"/>
<dbReference type="BioMuta" id="PPFIBP2"/>
<dbReference type="DMDM" id="296439314"/>
<dbReference type="jPOST" id="Q8ND30"/>
<dbReference type="MassIVE" id="Q8ND30"/>
<dbReference type="PaxDb" id="9606-ENSP00000299492"/>
<dbReference type="PeptideAtlas" id="Q8ND30"/>
<dbReference type="ProteomicsDB" id="21373"/>
<dbReference type="ProteomicsDB" id="72978">
    <molecule id="Q8ND30-1"/>
</dbReference>
<dbReference type="Antibodypedia" id="1168">
    <property type="antibodies" value="133 antibodies from 24 providers"/>
</dbReference>
<dbReference type="DNASU" id="8495"/>
<dbReference type="Ensembl" id="ENST00000299492.9">
    <molecule id="Q8ND30-1"/>
    <property type="protein sequence ID" value="ENSP00000299492.4"/>
    <property type="gene ID" value="ENSG00000166387.14"/>
</dbReference>
<dbReference type="Ensembl" id="ENST00000528883.5">
    <molecule id="Q8ND30-2"/>
    <property type="protein sequence ID" value="ENSP00000435469.1"/>
    <property type="gene ID" value="ENSG00000166387.14"/>
</dbReference>
<dbReference type="Ensembl" id="ENST00000530181.5">
    <molecule id="Q8ND30-3"/>
    <property type="protein sequence ID" value="ENSP00000437321.1"/>
    <property type="gene ID" value="ENSG00000166387.14"/>
</dbReference>
<dbReference type="GeneID" id="8495"/>
<dbReference type="KEGG" id="hsa:8495"/>
<dbReference type="MANE-Select" id="ENST00000299492.9">
    <property type="protein sequence ID" value="ENSP00000299492.4"/>
    <property type="RefSeq nucleotide sequence ID" value="NM_003621.5"/>
    <property type="RefSeq protein sequence ID" value="NP_003612.3"/>
</dbReference>
<dbReference type="UCSC" id="uc001mfj.6">
    <molecule id="Q8ND30-1"/>
    <property type="organism name" value="human"/>
</dbReference>
<dbReference type="AGR" id="HGNC:9250"/>
<dbReference type="CTD" id="8495"/>
<dbReference type="DisGeNET" id="8495"/>
<dbReference type="GeneCards" id="PPFIBP2"/>
<dbReference type="HGNC" id="HGNC:9250">
    <property type="gene designation" value="PPFIBP2"/>
</dbReference>
<dbReference type="HPA" id="ENSG00000166387">
    <property type="expression patterns" value="Low tissue specificity"/>
</dbReference>
<dbReference type="MIM" id="603142">
    <property type="type" value="gene"/>
</dbReference>
<dbReference type="neXtProt" id="NX_Q8ND30"/>
<dbReference type="OpenTargets" id="ENSG00000166387"/>
<dbReference type="PharmGKB" id="PA33571"/>
<dbReference type="VEuPathDB" id="HostDB:ENSG00000166387"/>
<dbReference type="eggNOG" id="KOG1899">
    <property type="taxonomic scope" value="Eukaryota"/>
</dbReference>
<dbReference type="GeneTree" id="ENSGT01050000244951"/>
<dbReference type="HOGENOM" id="CLU_011689_2_1_1"/>
<dbReference type="InParanoid" id="Q8ND30"/>
<dbReference type="OMA" id="KDHESSM"/>
<dbReference type="OrthoDB" id="6516566at2759"/>
<dbReference type="PAN-GO" id="Q8ND30">
    <property type="GO annotations" value="2 GO annotations based on evolutionary models"/>
</dbReference>
<dbReference type="PhylomeDB" id="Q8ND30"/>
<dbReference type="TreeFam" id="TF314207"/>
<dbReference type="PathwayCommons" id="Q8ND30"/>
<dbReference type="Reactome" id="R-HSA-388844">
    <property type="pathway name" value="Receptor-type tyrosine-protein phosphatases"/>
</dbReference>
<dbReference type="SignaLink" id="Q8ND30"/>
<dbReference type="BioGRID-ORCS" id="8495">
    <property type="hits" value="13 hits in 1154 CRISPR screens"/>
</dbReference>
<dbReference type="ChiTaRS" id="PPFIBP2">
    <property type="organism name" value="human"/>
</dbReference>
<dbReference type="EvolutionaryTrace" id="Q8ND30"/>
<dbReference type="GenomeRNAi" id="8495"/>
<dbReference type="Pharos" id="Q8ND30">
    <property type="development level" value="Tbio"/>
</dbReference>
<dbReference type="PRO" id="PR:Q8ND30"/>
<dbReference type="Proteomes" id="UP000005640">
    <property type="component" value="Chromosome 11"/>
</dbReference>
<dbReference type="RNAct" id="Q8ND30">
    <property type="molecule type" value="protein"/>
</dbReference>
<dbReference type="Bgee" id="ENSG00000166387">
    <property type="expression patterns" value="Expressed in parotid gland and 178 other cell types or tissues"/>
</dbReference>
<dbReference type="ExpressionAtlas" id="Q8ND30">
    <property type="expression patterns" value="baseline and differential"/>
</dbReference>
<dbReference type="GO" id="GO:0005829">
    <property type="term" value="C:cytosol"/>
    <property type="evidence" value="ECO:0000304"/>
    <property type="project" value="Reactome"/>
</dbReference>
<dbReference type="GO" id="GO:0005615">
    <property type="term" value="C:extracellular space"/>
    <property type="evidence" value="ECO:0007005"/>
    <property type="project" value="UniProtKB"/>
</dbReference>
<dbReference type="GO" id="GO:0048786">
    <property type="term" value="C:presynaptic active zone"/>
    <property type="evidence" value="ECO:0000318"/>
    <property type="project" value="GO_Central"/>
</dbReference>
<dbReference type="GO" id="GO:0042802">
    <property type="term" value="F:identical protein binding"/>
    <property type="evidence" value="ECO:0000314"/>
    <property type="project" value="UniProtKB"/>
</dbReference>
<dbReference type="GO" id="GO:0007528">
    <property type="term" value="P:neuromuscular junction development"/>
    <property type="evidence" value="ECO:0000318"/>
    <property type="project" value="GO_Central"/>
</dbReference>
<dbReference type="CDD" id="cd09563">
    <property type="entry name" value="SAM_liprin-beta1_2_repeat1"/>
    <property type="match status" value="1"/>
</dbReference>
<dbReference type="CDD" id="cd09566">
    <property type="entry name" value="SAM_liprin-beta1_2_repeat2"/>
    <property type="match status" value="1"/>
</dbReference>
<dbReference type="CDD" id="cd09569">
    <property type="entry name" value="SAM_liprin-beta1_2_repeat3"/>
    <property type="match status" value="1"/>
</dbReference>
<dbReference type="FunFam" id="1.10.150.50:FF:000005">
    <property type="entry name" value="Liprin-beta-1 isoform 1"/>
    <property type="match status" value="1"/>
</dbReference>
<dbReference type="FunFam" id="1.10.150.50:FF:000007">
    <property type="entry name" value="Liprin-beta-1 isoform 1"/>
    <property type="match status" value="1"/>
</dbReference>
<dbReference type="FunFam" id="1.10.150.50:FF:000017">
    <property type="entry name" value="Liprin-beta-1 isoform 1"/>
    <property type="match status" value="1"/>
</dbReference>
<dbReference type="Gene3D" id="1.10.150.50">
    <property type="entry name" value="Transcription Factor, Ets-1"/>
    <property type="match status" value="3"/>
</dbReference>
<dbReference type="InterPro" id="IPR029515">
    <property type="entry name" value="Liprin"/>
</dbReference>
<dbReference type="InterPro" id="IPR037617">
    <property type="entry name" value="Liprin-beta_SAM_rpt_1"/>
</dbReference>
<dbReference type="InterPro" id="IPR037618">
    <property type="entry name" value="Liprin-beta_SAM_rpt_2"/>
</dbReference>
<dbReference type="InterPro" id="IPR037619">
    <property type="entry name" value="Liprin-beta_SAM_rpt_3"/>
</dbReference>
<dbReference type="InterPro" id="IPR001660">
    <property type="entry name" value="SAM"/>
</dbReference>
<dbReference type="InterPro" id="IPR013761">
    <property type="entry name" value="SAM/pointed_sf"/>
</dbReference>
<dbReference type="PANTHER" id="PTHR12587">
    <property type="entry name" value="LAR INTERACTING PROTEIN LIP -RELATED PROTEIN"/>
    <property type="match status" value="1"/>
</dbReference>
<dbReference type="PANTHER" id="PTHR12587:SF18">
    <property type="entry name" value="LIPRIN-BETA-2"/>
    <property type="match status" value="1"/>
</dbReference>
<dbReference type="Pfam" id="PF00536">
    <property type="entry name" value="SAM_1"/>
    <property type="match status" value="2"/>
</dbReference>
<dbReference type="Pfam" id="PF07647">
    <property type="entry name" value="SAM_2"/>
    <property type="match status" value="1"/>
</dbReference>
<dbReference type="SMART" id="SM00454">
    <property type="entry name" value="SAM"/>
    <property type="match status" value="3"/>
</dbReference>
<dbReference type="SUPFAM" id="SSF47769">
    <property type="entry name" value="SAM/Pointed domain"/>
    <property type="match status" value="3"/>
</dbReference>
<dbReference type="PROSITE" id="PS50105">
    <property type="entry name" value="SAM_DOMAIN"/>
    <property type="match status" value="3"/>
</dbReference>
<proteinExistence type="evidence at protein level"/>
<feature type="chain" id="PRO_0000191036" description="Liprin-beta-2">
    <location>
        <begin position="1"/>
        <end position="876"/>
    </location>
</feature>
<feature type="domain" description="SAM 1" evidence="2">
    <location>
        <begin position="558"/>
        <end position="622"/>
    </location>
</feature>
<feature type="domain" description="SAM 2" evidence="2">
    <location>
        <begin position="630"/>
        <end position="693"/>
    </location>
</feature>
<feature type="domain" description="SAM 3" evidence="2">
    <location>
        <begin position="718"/>
        <end position="783"/>
    </location>
</feature>
<feature type="region of interest" description="Disordered" evidence="3">
    <location>
        <begin position="356"/>
        <end position="376"/>
    </location>
</feature>
<feature type="region of interest" description="Disordered" evidence="3">
    <location>
        <begin position="425"/>
        <end position="451"/>
    </location>
</feature>
<feature type="region of interest" description="Disordered" evidence="3">
    <location>
        <begin position="470"/>
        <end position="500"/>
    </location>
</feature>
<feature type="region of interest" description="Disordered" evidence="3">
    <location>
        <begin position="527"/>
        <end position="553"/>
    </location>
</feature>
<feature type="coiled-coil region" evidence="7">
    <location>
        <begin position="101"/>
        <end position="313"/>
    </location>
</feature>
<feature type="compositionally biased region" description="Polar residues" evidence="3">
    <location>
        <begin position="473"/>
        <end position="489"/>
    </location>
</feature>
<feature type="modified residue" description="Phosphoserine" evidence="12">
    <location>
        <position position="329"/>
    </location>
</feature>
<feature type="modified residue" description="Phosphoserine" evidence="12 13">
    <location>
        <position position="363"/>
    </location>
</feature>
<feature type="modified residue" description="Phosphoserine" evidence="12 13">
    <location>
        <position position="387"/>
    </location>
</feature>
<feature type="modified residue" description="Phosphoserine" evidence="12">
    <location>
        <position position="512"/>
    </location>
</feature>
<feature type="splice variant" id="VSP_047382" description="In isoform 3." evidence="10">
    <location>
        <begin position="1"/>
        <end position="143"/>
    </location>
</feature>
<feature type="splice variant" id="VSP_047383" description="In isoform 2." evidence="9">
    <location>
        <begin position="1"/>
        <end position="112"/>
    </location>
</feature>
<feature type="splice variant" id="VSP_047384" description="In isoform 2." evidence="9">
    <original>RLEGDKESLILQ</original>
    <variation>MSSEQWPRLPGK</variation>
    <location>
        <begin position="113"/>
        <end position="124"/>
    </location>
</feature>
<feature type="splice variant" id="VSP_047385" description="In isoform 3." evidence="10">
    <original>VCLEGHQVKLNAAEEMLQQ</original>
    <variation>MGKLITRMWKLLRRRSAPK</variation>
    <location>
        <begin position="144"/>
        <end position="162"/>
    </location>
</feature>
<feature type="sequence variant" id="VAR_049999" description="In dbSNP:rs4758209." evidence="4 5 6 8">
    <original>R</original>
    <variation>G</variation>
    <location>
        <position position="658"/>
    </location>
</feature>
<feature type="sequence conflict" description="In Ref. 2; AAH21714." evidence="10" ref="2">
    <original>L</original>
    <variation>I</variation>
    <location>
        <position position="128"/>
    </location>
</feature>
<feature type="sequence conflict" description="In Ref. 1; BAH12419." evidence="10" ref="1">
    <original>Q</original>
    <variation>H</variation>
    <location>
        <position position="161"/>
    </location>
</feature>
<feature type="sequence conflict" description="In Ref. 4; AAC26104." evidence="10" ref="4">
    <original>R</original>
    <variation>L</variation>
    <location>
        <position position="702"/>
    </location>
</feature>
<feature type="sequence conflict" description="In Ref. 4; AAC26104." evidence="10" ref="4">
    <original>E</original>
    <variation>V</variation>
    <location>
        <position position="734"/>
    </location>
</feature>
<feature type="sequence conflict" description="In Ref. 4; AAC26104." evidence="10" ref="4">
    <original>R</original>
    <variation>L</variation>
    <location>
        <position position="754"/>
    </location>
</feature>
<feature type="helix" evidence="14">
    <location>
        <begin position="199"/>
        <end position="261"/>
    </location>
</feature>
<evidence type="ECO:0000250" key="1"/>
<evidence type="ECO:0000255" key="2">
    <source>
        <dbReference type="PROSITE-ProRule" id="PRU00184"/>
    </source>
</evidence>
<evidence type="ECO:0000256" key="3">
    <source>
        <dbReference type="SAM" id="MobiDB-lite"/>
    </source>
</evidence>
<evidence type="ECO:0000269" key="4">
    <source>
    </source>
</evidence>
<evidence type="ECO:0000269" key="5">
    <source>
    </source>
</evidence>
<evidence type="ECO:0000269" key="6">
    <source>
    </source>
</evidence>
<evidence type="ECO:0000269" key="7">
    <source>
    </source>
</evidence>
<evidence type="ECO:0000269" key="8">
    <source>
    </source>
</evidence>
<evidence type="ECO:0000303" key="9">
    <source>
    </source>
</evidence>
<evidence type="ECO:0000305" key="10"/>
<evidence type="ECO:0007744" key="11">
    <source>
        <dbReference type="PDB" id="3QH9"/>
    </source>
</evidence>
<evidence type="ECO:0007744" key="12">
    <source>
    </source>
</evidence>
<evidence type="ECO:0007744" key="13">
    <source>
    </source>
</evidence>
<evidence type="ECO:0007829" key="14">
    <source>
        <dbReference type="PDB" id="3QH9"/>
    </source>
</evidence>
<accession>Q8ND30</accession>
<accession>B7Z433</accession>
<accession>E9PK77</accession>
<accession>O75337</accession>
<accession>Q8WW26</accession>
<keyword id="KW-0002">3D-structure</keyword>
<keyword id="KW-0025">Alternative splicing</keyword>
<keyword id="KW-0175">Coiled coil</keyword>
<keyword id="KW-0597">Phosphoprotein</keyword>
<keyword id="KW-1267">Proteomics identification</keyword>
<keyword id="KW-1185">Reference proteome</keyword>
<keyword id="KW-0677">Repeat</keyword>
<gene>
    <name type="primary">PPFIBP2</name>
</gene>
<comment type="function">
    <text evidence="8">May regulate the disassembly of focal adhesions. Did not bind receptor-like tyrosine phosphatases type 2A.</text>
</comment>
<comment type="subunit">
    <text evidence="7">Forms homodimers and heterodimers (PubMed:21462929).</text>
</comment>
<comment type="interaction">
    <interactant intactId="EBI-744056">
        <id>Q8ND30</id>
    </interactant>
    <interactant intactId="EBI-886">
        <id>P46108</id>
        <label>CRK</label>
    </interactant>
    <organismsDiffer>false</organismsDiffer>
    <experiments>5</experiments>
</comment>
<comment type="interaction">
    <interactant intactId="EBI-744056">
        <id>Q8ND30</id>
    </interactant>
    <interactant intactId="EBI-12056251">
        <id>Q9ULV5-2</id>
        <label>HSF4</label>
    </interactant>
    <organismsDiffer>false</organismsDiffer>
    <experiments>3</experiments>
</comment>
<comment type="alternative products">
    <event type="alternative splicing"/>
    <isoform>
        <id>Q8ND30-1</id>
        <name>1</name>
        <sequence type="displayed"/>
    </isoform>
    <isoform>
        <id>Q8ND30-2</id>
        <name>2</name>
        <sequence type="described" ref="VSP_047383 VSP_047384"/>
    </isoform>
    <isoform>
        <id>Q8ND30-3</id>
        <name>3</name>
        <sequence type="described" ref="VSP_047382 VSP_047385"/>
    </isoform>
</comment>
<comment type="tissue specificity">
    <text evidence="8">Widely expressed.</text>
</comment>
<comment type="domain">
    <text evidence="1">The N-terminal coiled coil regions mediate homodimerization preferentially and heterodimerization type beta/beta. The C-terminal, non-coiled coil regions mediate heterodimerization type beta/alpha (By similarity).</text>
</comment>
<comment type="similarity">
    <text evidence="10">Belongs to the liprin family. Liprin-beta subfamily.</text>
</comment>
<organism>
    <name type="scientific">Homo sapiens</name>
    <name type="common">Human</name>
    <dbReference type="NCBI Taxonomy" id="9606"/>
    <lineage>
        <taxon>Eukaryota</taxon>
        <taxon>Metazoa</taxon>
        <taxon>Chordata</taxon>
        <taxon>Craniata</taxon>
        <taxon>Vertebrata</taxon>
        <taxon>Euteleostomi</taxon>
        <taxon>Mammalia</taxon>
        <taxon>Eutheria</taxon>
        <taxon>Euarchontoglires</taxon>
        <taxon>Primates</taxon>
        <taxon>Haplorrhini</taxon>
        <taxon>Catarrhini</taxon>
        <taxon>Hominidae</taxon>
        <taxon>Homo</taxon>
    </lineage>
</organism>
<protein>
    <recommendedName>
        <fullName>Liprin-beta-2</fullName>
    </recommendedName>
    <alternativeName>
        <fullName>Protein tyrosine phosphatase receptor type f polypeptide-interacting protein-binding protein 2</fullName>
        <shortName>PTPRF-interacting protein-binding protein 2</shortName>
    </alternativeName>
</protein>
<reference key="1">
    <citation type="journal article" date="2004" name="Nat. Genet.">
        <title>Complete sequencing and characterization of 21,243 full-length human cDNAs.</title>
        <authorList>
            <person name="Ota T."/>
            <person name="Suzuki Y."/>
            <person name="Nishikawa T."/>
            <person name="Otsuki T."/>
            <person name="Sugiyama T."/>
            <person name="Irie R."/>
            <person name="Wakamatsu A."/>
            <person name="Hayashi K."/>
            <person name="Sato H."/>
            <person name="Nagai K."/>
            <person name="Kimura K."/>
            <person name="Makita H."/>
            <person name="Sekine M."/>
            <person name="Obayashi M."/>
            <person name="Nishi T."/>
            <person name="Shibahara T."/>
            <person name="Tanaka T."/>
            <person name="Ishii S."/>
            <person name="Yamamoto J."/>
            <person name="Saito K."/>
            <person name="Kawai Y."/>
            <person name="Isono Y."/>
            <person name="Nakamura Y."/>
            <person name="Nagahari K."/>
            <person name="Murakami K."/>
            <person name="Yasuda T."/>
            <person name="Iwayanagi T."/>
            <person name="Wagatsuma M."/>
            <person name="Shiratori A."/>
            <person name="Sudo H."/>
            <person name="Hosoiri T."/>
            <person name="Kaku Y."/>
            <person name="Kodaira H."/>
            <person name="Kondo H."/>
            <person name="Sugawara M."/>
            <person name="Takahashi M."/>
            <person name="Kanda K."/>
            <person name="Yokoi T."/>
            <person name="Furuya T."/>
            <person name="Kikkawa E."/>
            <person name="Omura Y."/>
            <person name="Abe K."/>
            <person name="Kamihara K."/>
            <person name="Katsuta N."/>
            <person name="Sato K."/>
            <person name="Tanikawa M."/>
            <person name="Yamazaki M."/>
            <person name="Ninomiya K."/>
            <person name="Ishibashi T."/>
            <person name="Yamashita H."/>
            <person name="Murakawa K."/>
            <person name="Fujimori K."/>
            <person name="Tanai H."/>
            <person name="Kimata M."/>
            <person name="Watanabe M."/>
            <person name="Hiraoka S."/>
            <person name="Chiba Y."/>
            <person name="Ishida S."/>
            <person name="Ono Y."/>
            <person name="Takiguchi S."/>
            <person name="Watanabe S."/>
            <person name="Yosida M."/>
            <person name="Hotuta T."/>
            <person name="Kusano J."/>
            <person name="Kanehori K."/>
            <person name="Takahashi-Fujii A."/>
            <person name="Hara H."/>
            <person name="Tanase T.-O."/>
            <person name="Nomura Y."/>
            <person name="Togiya S."/>
            <person name="Komai F."/>
            <person name="Hara R."/>
            <person name="Takeuchi K."/>
            <person name="Arita M."/>
            <person name="Imose N."/>
            <person name="Musashino K."/>
            <person name="Yuuki H."/>
            <person name="Oshima A."/>
            <person name="Sasaki N."/>
            <person name="Aotsuka S."/>
            <person name="Yoshikawa Y."/>
            <person name="Matsunawa H."/>
            <person name="Ichihara T."/>
            <person name="Shiohata N."/>
            <person name="Sano S."/>
            <person name="Moriya S."/>
            <person name="Momiyama H."/>
            <person name="Satoh N."/>
            <person name="Takami S."/>
            <person name="Terashima Y."/>
            <person name="Suzuki O."/>
            <person name="Nakagawa S."/>
            <person name="Senoh A."/>
            <person name="Mizoguchi H."/>
            <person name="Goto Y."/>
            <person name="Shimizu F."/>
            <person name="Wakebe H."/>
            <person name="Hishigaki H."/>
            <person name="Watanabe T."/>
            <person name="Sugiyama A."/>
            <person name="Takemoto M."/>
            <person name="Kawakami B."/>
            <person name="Yamazaki M."/>
            <person name="Watanabe K."/>
            <person name="Kumagai A."/>
            <person name="Itakura S."/>
            <person name="Fukuzumi Y."/>
            <person name="Fujimori Y."/>
            <person name="Komiyama M."/>
            <person name="Tashiro H."/>
            <person name="Tanigami A."/>
            <person name="Fujiwara T."/>
            <person name="Ono T."/>
            <person name="Yamada K."/>
            <person name="Fujii Y."/>
            <person name="Ozaki K."/>
            <person name="Hirao M."/>
            <person name="Ohmori Y."/>
            <person name="Kawabata A."/>
            <person name="Hikiji T."/>
            <person name="Kobatake N."/>
            <person name="Inagaki H."/>
            <person name="Ikema Y."/>
            <person name="Okamoto S."/>
            <person name="Okitani R."/>
            <person name="Kawakami T."/>
            <person name="Noguchi S."/>
            <person name="Itoh T."/>
            <person name="Shigeta K."/>
            <person name="Senba T."/>
            <person name="Matsumura K."/>
            <person name="Nakajima Y."/>
            <person name="Mizuno T."/>
            <person name="Morinaga M."/>
            <person name="Sasaki M."/>
            <person name="Togashi T."/>
            <person name="Oyama M."/>
            <person name="Hata H."/>
            <person name="Watanabe M."/>
            <person name="Komatsu T."/>
            <person name="Mizushima-Sugano J."/>
            <person name="Satoh T."/>
            <person name="Shirai Y."/>
            <person name="Takahashi Y."/>
            <person name="Nakagawa K."/>
            <person name="Okumura K."/>
            <person name="Nagase T."/>
            <person name="Nomura N."/>
            <person name="Kikuchi H."/>
            <person name="Masuho Y."/>
            <person name="Yamashita R."/>
            <person name="Nakai K."/>
            <person name="Yada T."/>
            <person name="Nakamura Y."/>
            <person name="Ohara O."/>
            <person name="Isogai T."/>
            <person name="Sugano S."/>
        </authorList>
    </citation>
    <scope>NUCLEOTIDE SEQUENCE [LARGE SCALE MRNA] (ISOFORM 2)</scope>
    <scope>VARIANT GLY-658</scope>
    <source>
        <tissue>Tongue</tissue>
    </source>
</reference>
<reference key="2">
    <citation type="journal article" date="2007" name="BMC Genomics">
        <title>The full-ORF clone resource of the German cDNA consortium.</title>
        <authorList>
            <person name="Bechtel S."/>
            <person name="Rosenfelder H."/>
            <person name="Duda A."/>
            <person name="Schmidt C.P."/>
            <person name="Ernst U."/>
            <person name="Wellenreuther R."/>
            <person name="Mehrle A."/>
            <person name="Schuster C."/>
            <person name="Bahr A."/>
            <person name="Bloecker H."/>
            <person name="Heubner D."/>
            <person name="Hoerlein A."/>
            <person name="Michel G."/>
            <person name="Wedler H."/>
            <person name="Koehrer K."/>
            <person name="Ottenwaelder B."/>
            <person name="Poustka A."/>
            <person name="Wiemann S."/>
            <person name="Schupp I."/>
        </authorList>
    </citation>
    <scope>NUCLEOTIDE SEQUENCE [LARGE SCALE MRNA] (ISOFORM 1)</scope>
    <scope>VARIANT GLY-658</scope>
    <source>
        <tissue>Lymph node</tissue>
    </source>
</reference>
<reference key="3">
    <citation type="journal article" date="2006" name="Nature">
        <title>Human chromosome 11 DNA sequence and analysis including novel gene identification.</title>
        <authorList>
            <person name="Taylor T.D."/>
            <person name="Noguchi H."/>
            <person name="Totoki Y."/>
            <person name="Toyoda A."/>
            <person name="Kuroki Y."/>
            <person name="Dewar K."/>
            <person name="Lloyd C."/>
            <person name="Itoh T."/>
            <person name="Takeda T."/>
            <person name="Kim D.-W."/>
            <person name="She X."/>
            <person name="Barlow K.F."/>
            <person name="Bloom T."/>
            <person name="Bruford E."/>
            <person name="Chang J.L."/>
            <person name="Cuomo C.A."/>
            <person name="Eichler E."/>
            <person name="FitzGerald M.G."/>
            <person name="Jaffe D.B."/>
            <person name="LaButti K."/>
            <person name="Nicol R."/>
            <person name="Park H.-S."/>
            <person name="Seaman C."/>
            <person name="Sougnez C."/>
            <person name="Yang X."/>
            <person name="Zimmer A.R."/>
            <person name="Zody M.C."/>
            <person name="Birren B.W."/>
            <person name="Nusbaum C."/>
            <person name="Fujiyama A."/>
            <person name="Hattori M."/>
            <person name="Rogers J."/>
            <person name="Lander E.S."/>
            <person name="Sakaki Y."/>
        </authorList>
    </citation>
    <scope>NUCLEOTIDE SEQUENCE [LARGE SCALE GENOMIC DNA]</scope>
</reference>
<reference key="4">
    <citation type="journal article" date="2004" name="Genome Res.">
        <title>The status, quality, and expansion of the NIH full-length cDNA project: the Mammalian Gene Collection (MGC).</title>
        <authorList>
            <consortium name="The MGC Project Team"/>
        </authorList>
    </citation>
    <scope>NUCLEOTIDE SEQUENCE [LARGE SCALE MRNA] (ISOFORM 1)</scope>
    <scope>VARIANT GLY-658</scope>
    <source>
        <tissue>Testis</tissue>
    </source>
</reference>
<reference key="5">
    <citation type="journal article" date="1998" name="J. Biol. Chem.">
        <title>Liprins, a family of LAR transmembrane protein-tyrosine phosphatase-interacting proteins.</title>
        <authorList>
            <person name="Serra-Pages C."/>
            <person name="Medley Q.G."/>
            <person name="Tang M."/>
            <person name="Hart A."/>
            <person name="Streuli M."/>
        </authorList>
    </citation>
    <scope>NUCLEOTIDE SEQUENCE [MRNA] OF 94-876</scope>
    <scope>TISSUE SPECIFICITY</scope>
    <scope>FUNCTION</scope>
    <scope>VARIANT GLY-658</scope>
</reference>
<reference key="6">
    <citation type="journal article" date="2008" name="Proc. Natl. Acad. Sci. U.S.A.">
        <title>A quantitative atlas of mitotic phosphorylation.</title>
        <authorList>
            <person name="Dephoure N."/>
            <person name="Zhou C."/>
            <person name="Villen J."/>
            <person name="Beausoleil S.A."/>
            <person name="Bakalarski C.E."/>
            <person name="Elledge S.J."/>
            <person name="Gygi S.P."/>
        </authorList>
    </citation>
    <scope>IDENTIFICATION BY MASS SPECTROMETRY [LARGE SCALE ANALYSIS]</scope>
    <source>
        <tissue>Cervix carcinoma</tissue>
    </source>
</reference>
<reference key="7">
    <citation type="journal article" date="2009" name="Sci. Signal.">
        <title>Quantitative phosphoproteomic analysis of T cell receptor signaling reveals system-wide modulation of protein-protein interactions.</title>
        <authorList>
            <person name="Mayya V."/>
            <person name="Lundgren D.H."/>
            <person name="Hwang S.-I."/>
            <person name="Rezaul K."/>
            <person name="Wu L."/>
            <person name="Eng J.K."/>
            <person name="Rodionov V."/>
            <person name="Han D.K."/>
        </authorList>
    </citation>
    <scope>IDENTIFICATION BY MASS SPECTROMETRY [LARGE SCALE ANALYSIS]</scope>
    <source>
        <tissue>Leukemic T-cell</tissue>
    </source>
</reference>
<reference key="8">
    <citation type="journal article" date="2013" name="J. Proteome Res.">
        <title>Toward a comprehensive characterization of a human cancer cell phosphoproteome.</title>
        <authorList>
            <person name="Zhou H."/>
            <person name="Di Palma S."/>
            <person name="Preisinger C."/>
            <person name="Peng M."/>
            <person name="Polat A.N."/>
            <person name="Heck A.J."/>
            <person name="Mohammed S."/>
        </authorList>
    </citation>
    <scope>PHOSPHORYLATION [LARGE SCALE ANALYSIS] AT SER-329; SER-363; SER-387 AND SER-512</scope>
    <scope>IDENTIFICATION BY MASS SPECTROMETRY [LARGE SCALE ANALYSIS]</scope>
    <source>
        <tissue>Cervix carcinoma</tissue>
        <tissue>Erythroleukemia</tissue>
    </source>
</reference>
<reference key="9">
    <citation type="journal article" date="2014" name="J. Proteomics">
        <title>An enzyme assisted RP-RPLC approach for in-depth analysis of human liver phosphoproteome.</title>
        <authorList>
            <person name="Bian Y."/>
            <person name="Song C."/>
            <person name="Cheng K."/>
            <person name="Dong M."/>
            <person name="Wang F."/>
            <person name="Huang J."/>
            <person name="Sun D."/>
            <person name="Wang L."/>
            <person name="Ye M."/>
            <person name="Zou H."/>
        </authorList>
    </citation>
    <scope>PHOSPHORYLATION [LARGE SCALE ANALYSIS] AT SER-363 AND SER-387</scope>
    <scope>IDENTIFICATION BY MASS SPECTROMETRY [LARGE SCALE ANALYSIS]</scope>
    <source>
        <tissue>Liver</tissue>
    </source>
</reference>
<reference evidence="11" key="10">
    <citation type="journal article" date="2011" name="Biochemistry">
        <title>Crystal structure of the central coiled-coil domain from human liprin-beta2.</title>
        <authorList>
            <person name="Stafford R.L."/>
            <person name="Tang M.Y."/>
            <person name="Sawaya M.R."/>
            <person name="Phillips M.L."/>
            <person name="Bowie J.U."/>
        </authorList>
    </citation>
    <scope>X-RAY CRYSTALLOGRAPHY (2.01 ANGSTROMS) OF 198-263</scope>
    <scope>SUBUNIT</scope>
</reference>
<sequence length="876" mass="98544">MASDASHALEAALEQMDGIIAGTKTGADLSDGTCEPGLASPASYMNPFPVLHLIEDLRLALEMLELPQERAALLSQIPGPTAAYIKEWFEESLSQVNHHSAASNETYQERLARLEGDKESLILQVSVLTDQVEAQGEKIRDLEVCLEGHQVKLNAAEEMLQQELLSRTSLETQKLDLMTEVSELKLKLVGMEKEQREQEEKQRKAEELLQELRHLKIKVEELENERNQYEWKLKATKAEVAQLQEQVALKDAEIERLHSQLSRTAALHSESHTERDQEIQRLKMGMETLLLANEDKDRRIEELTGLLNQYRKVKEIVMVTQGPSERTLSINEEEPEGGFSKWNATNKDPEELFKQEMPPRCSSPTVGPPPLPQKSLETRAQKKLSCSLEDLRSESVDKCMDGNQPFPVLEPKDSPFLAEHKYPTLPGKLSGATPNGEAAKSPPTICQPDATGSSLLRLRDTESGWDDTAVVNDLSSTSSGTESGPQSPLTPDGKRNPKGIKKFWGKIRRTQSGNFYTDTLGMAEFRRGGLRATAGPRLSRTRDSKGQKSDANAPFAQWSTERVCAWLEDFGLAQYVIFARQWVSSGHTLLTATPQDMEKELGIKHPLHRKKLVLAVKAINTKQEEKSALLDHIWVTRWLDDIGLPQYKDQFHESRVDRRMLQYLTVNDLLFLKVTSQLHHLSIKCAIHVLHVNKFNPHCLHRRPADESNLSPSEVVQWSNHRVMEWLRSVDLAEYAPNLRGSGVHGGLIILEPRFTGDTLAMLLNIPPQKTLLRRHLTTKFNALIGPEAEQEKREKMASPAYTPLTTTAKVRPRKLGFSHFGNIRKKKFDESTDYICPMEPSDGVSDSHRVYSGYRGLSPLDAPELDGLDQVGQIS</sequence>
<name>LIPB2_HUMAN</name>